<accession>Q04CQ7</accession>
<reference key="1">
    <citation type="journal article" date="2006" name="Proc. Natl. Acad. Sci. U.S.A.">
        <title>Comparative genomics of the lactic acid bacteria.</title>
        <authorList>
            <person name="Makarova K.S."/>
            <person name="Slesarev A."/>
            <person name="Wolf Y.I."/>
            <person name="Sorokin A."/>
            <person name="Mirkin B."/>
            <person name="Koonin E.V."/>
            <person name="Pavlov A."/>
            <person name="Pavlova N."/>
            <person name="Karamychev V."/>
            <person name="Polouchine N."/>
            <person name="Shakhova V."/>
            <person name="Grigoriev I."/>
            <person name="Lou Y."/>
            <person name="Rohksar D."/>
            <person name="Lucas S."/>
            <person name="Huang K."/>
            <person name="Goodstein D.M."/>
            <person name="Hawkins T."/>
            <person name="Plengvidhya V."/>
            <person name="Welker D."/>
            <person name="Hughes J."/>
            <person name="Goh Y."/>
            <person name="Benson A."/>
            <person name="Baldwin K."/>
            <person name="Lee J.-H."/>
            <person name="Diaz-Muniz I."/>
            <person name="Dosti B."/>
            <person name="Smeianov V."/>
            <person name="Wechter W."/>
            <person name="Barabote R."/>
            <person name="Lorca G."/>
            <person name="Altermann E."/>
            <person name="Barrangou R."/>
            <person name="Ganesan B."/>
            <person name="Xie Y."/>
            <person name="Rawsthorne H."/>
            <person name="Tamir D."/>
            <person name="Parker C."/>
            <person name="Breidt F."/>
            <person name="Broadbent J.R."/>
            <person name="Hutkins R."/>
            <person name="O'Sullivan D."/>
            <person name="Steele J."/>
            <person name="Unlu G."/>
            <person name="Saier M.H. Jr."/>
            <person name="Klaenhammer T."/>
            <person name="Richardson P."/>
            <person name="Kozyavkin S."/>
            <person name="Weimer B.C."/>
            <person name="Mills D.A."/>
        </authorList>
    </citation>
    <scope>NUCLEOTIDE SEQUENCE [LARGE SCALE GENOMIC DNA]</scope>
    <source>
        <strain>ATCC BAA-365 / Lb-18</strain>
    </source>
</reference>
<keyword id="KW-0021">Allosteric enzyme</keyword>
<keyword id="KW-0846">Cobalamin</keyword>
<keyword id="KW-0170">Cobalt</keyword>
<keyword id="KW-1015">Disulfide bond</keyword>
<keyword id="KW-0235">DNA replication</keyword>
<keyword id="KW-0560">Oxidoreductase</keyword>
<keyword id="KW-0676">Redox-active center</keyword>
<dbReference type="EC" id="1.17.4.2"/>
<dbReference type="EMBL" id="CP000412">
    <property type="protein sequence ID" value="ABJ57765.1"/>
    <property type="molecule type" value="Genomic_DNA"/>
</dbReference>
<dbReference type="RefSeq" id="WP_003620293.1">
    <property type="nucleotide sequence ID" value="NC_008529.1"/>
</dbReference>
<dbReference type="SMR" id="Q04CQ7"/>
<dbReference type="KEGG" id="lbu:LBUL_0079"/>
<dbReference type="HOGENOM" id="CLU_002384_0_0_9"/>
<dbReference type="BioCyc" id="LDEL321956:LBUL_RS00360-MONOMER"/>
<dbReference type="GO" id="GO:0031419">
    <property type="term" value="F:cobalamin binding"/>
    <property type="evidence" value="ECO:0007669"/>
    <property type="project" value="UniProtKB-KW"/>
</dbReference>
<dbReference type="GO" id="GO:0000166">
    <property type="term" value="F:nucleotide binding"/>
    <property type="evidence" value="ECO:0007669"/>
    <property type="project" value="InterPro"/>
</dbReference>
<dbReference type="GO" id="GO:0004748">
    <property type="term" value="F:ribonucleoside-diphosphate reductase activity, thioredoxin disulfide as acceptor"/>
    <property type="evidence" value="ECO:0007669"/>
    <property type="project" value="InterPro"/>
</dbReference>
<dbReference type="GO" id="GO:0008998">
    <property type="term" value="F:ribonucleoside-triphosphate reductase (thioredoxin) activity"/>
    <property type="evidence" value="ECO:0007669"/>
    <property type="project" value="UniProtKB-EC"/>
</dbReference>
<dbReference type="GO" id="GO:0006260">
    <property type="term" value="P:DNA replication"/>
    <property type="evidence" value="ECO:0007669"/>
    <property type="project" value="UniProtKB-KW"/>
</dbReference>
<dbReference type="CDD" id="cd01676">
    <property type="entry name" value="RNR_II_monomer"/>
    <property type="match status" value="1"/>
</dbReference>
<dbReference type="Gene3D" id="3.20.70.20">
    <property type="match status" value="1"/>
</dbReference>
<dbReference type="Gene3D" id="3.30.1620.10">
    <property type="entry name" value="b-12 dependent (class ii) ribonucleotide reductase, Chain A, Domain 2"/>
    <property type="match status" value="1"/>
</dbReference>
<dbReference type="Gene3D" id="3.90.1390.10">
    <property type="entry name" value="b-12 dependent (class ii) ribonucleotide reductase, chain A, domain 3"/>
    <property type="match status" value="1"/>
</dbReference>
<dbReference type="InterPro" id="IPR050862">
    <property type="entry name" value="RdRp_reductase_class-2"/>
</dbReference>
<dbReference type="InterPro" id="IPR054158">
    <property type="entry name" value="RNR-II_ins_dom"/>
</dbReference>
<dbReference type="InterPro" id="IPR040763">
    <property type="entry name" value="RNR_alpha_hel"/>
</dbReference>
<dbReference type="InterPro" id="IPR013345">
    <property type="entry name" value="RTP_Rdtase_AdoCbl-dep"/>
</dbReference>
<dbReference type="NCBIfam" id="TIGR02505">
    <property type="entry name" value="RTPR"/>
    <property type="match status" value="1"/>
</dbReference>
<dbReference type="PANTHER" id="PTHR43371:SF1">
    <property type="entry name" value="RIBONUCLEOSIDE-DIPHOSPHATE REDUCTASE"/>
    <property type="match status" value="1"/>
</dbReference>
<dbReference type="PANTHER" id="PTHR43371">
    <property type="entry name" value="VITAMIN B12-DEPENDENT RIBONUCLEOTIDE REDUCTASE"/>
    <property type="match status" value="1"/>
</dbReference>
<dbReference type="Pfam" id="PF21995">
    <property type="entry name" value="RNR-II_ins_dom"/>
    <property type="match status" value="1"/>
</dbReference>
<dbReference type="Pfam" id="PF17975">
    <property type="entry name" value="RNR_Alpha"/>
    <property type="match status" value="1"/>
</dbReference>
<dbReference type="SUPFAM" id="SSF51998">
    <property type="entry name" value="PFL-like glycyl radical enzymes"/>
    <property type="match status" value="1"/>
</dbReference>
<sequence length="739" mass="81896">MSEGISLSAEFIDRVKASVKPHWGKLGWVTYKRTYARWLPEKGRSENWDETVKRVVEGNINLDPRLQDSPSLELKQSLTEEAERLYKLIYGLGATPSGRNLWISGTDYQRRTGDSLNNCWFVAIRPQKYGDSKIVPSYLGKQEKAVSMPFSFLFDELMKGGGVGFSVARSNISQIPRVDFAIDLQVVVDESSESYDASVKVGAVGKNEVVQDADSIYYRLPDTREGWVLANALLIDLHFAQTNPDRKQKLILDLSDIRPYGAEIHGFGGTASGPMPLISMLLDINEVLNNKAGGRLTSVDAADICNLIGKAVVAGNVRRSAELALGSNDDQDFISMKQDQEKLMHHRWASNNSVAVDSAFSGYQPIAAGIRENGEPGIVNLDLSKNYGRIVDGYQAGIDGDVEGTNPCGEISLANGEPCNLFEVFPLIAEEQGWDLQEVFALAARYAKRVTFSPYDWEISREIIQKNRRIGISMSGIQDWLLTRLGNRVVTGFKDDFDPETHEAIKVPVYDKRAIKMVDQLYKAVVKADQDYSKTLGCNESIKHTTVKPSGTVAKLAGASEGMHFHYGAYLIQRIRFQNSDPLLPALKACGYRTEADIYTENTTCVEFPVKAVGADNPNFASAGTVSIAEQFATQAFLQTYWSDNAVSCTITFQDSEGDQVESLLRQYRFIIKSTSLLPYFGGSLQQAPKEPIDKETYEKRSQEITGNVEEVFSQLNSDVKDLELVDQTDCEGGACPIK</sequence>
<protein>
    <recommendedName>
        <fullName>Adenosylcobalamin-dependent ribonucleoside-triphosphate reductase</fullName>
        <shortName>RTPR</shortName>
        <ecNumber>1.17.4.2</ecNumber>
    </recommendedName>
</protein>
<organism>
    <name type="scientific">Lactobacillus delbrueckii subsp. bulgaricus (strain ATCC BAA-365 / Lb-18)</name>
    <dbReference type="NCBI Taxonomy" id="321956"/>
    <lineage>
        <taxon>Bacteria</taxon>
        <taxon>Bacillati</taxon>
        <taxon>Bacillota</taxon>
        <taxon>Bacilli</taxon>
        <taxon>Lactobacillales</taxon>
        <taxon>Lactobacillaceae</taxon>
        <taxon>Lactobacillus</taxon>
    </lineage>
</organism>
<comment type="catalytic activity">
    <reaction>
        <text>a 2'-deoxyribonucleoside 5'-triphosphate + [thioredoxin]-disulfide + H2O = a ribonucleoside 5'-triphosphate + [thioredoxin]-dithiol</text>
        <dbReference type="Rhea" id="RHEA:12701"/>
        <dbReference type="Rhea" id="RHEA-COMP:10698"/>
        <dbReference type="Rhea" id="RHEA-COMP:10700"/>
        <dbReference type="ChEBI" id="CHEBI:15377"/>
        <dbReference type="ChEBI" id="CHEBI:29950"/>
        <dbReference type="ChEBI" id="CHEBI:50058"/>
        <dbReference type="ChEBI" id="CHEBI:61557"/>
        <dbReference type="ChEBI" id="CHEBI:61560"/>
        <dbReference type="EC" id="1.17.4.2"/>
    </reaction>
</comment>
<comment type="cofactor">
    <cofactor evidence="1">
        <name>adenosylcob(III)alamin</name>
        <dbReference type="ChEBI" id="CHEBI:18408"/>
    </cofactor>
</comment>
<comment type="activity regulation">
    <text evidence="1">Allosterically regulated by ATP and dNTP.</text>
</comment>
<comment type="subunit">
    <text evidence="1">Monomer.</text>
</comment>
<comment type="similarity">
    <text evidence="2">Belongs to the class II ribonucleoside-triphosphate reductase family.</text>
</comment>
<gene>
    <name type="primary">rtpR</name>
    <name type="ordered locus">LBUL_0079</name>
</gene>
<feature type="chain" id="PRO_0000326540" description="Adenosylcobalamin-dependent ribonucleoside-triphosphate reductase">
    <location>
        <begin position="1"/>
        <end position="739"/>
    </location>
</feature>
<feature type="region of interest" description="Effector region-1" evidence="1">
    <location>
        <begin position="147"/>
        <end position="158"/>
    </location>
</feature>
<feature type="region of interest" description="Effector region-2" evidence="1">
    <location>
        <begin position="168"/>
        <end position="313"/>
    </location>
</feature>
<feature type="region of interest" description="Adenosylcobalamin-binding-1" evidence="1">
    <location>
        <begin position="565"/>
        <end position="626"/>
    </location>
</feature>
<feature type="region of interest" description="Adenosylcobalamin-binding-2" evidence="1">
    <location>
        <begin position="685"/>
        <end position="724"/>
    </location>
</feature>
<feature type="active site" evidence="1">
    <location>
        <position position="408"/>
    </location>
</feature>
<feature type="active site" evidence="1">
    <location>
        <position position="410"/>
    </location>
</feature>
<feature type="disulfide bond" description="Redox-active" evidence="1">
    <location>
        <begin position="119"/>
        <end position="419"/>
    </location>
</feature>
<name>RTPR_LACDB</name>
<proteinExistence type="inferred from homology"/>
<evidence type="ECO:0000250" key="1"/>
<evidence type="ECO:0000305" key="2"/>